<gene>
    <name evidence="1" type="primary">glmU</name>
    <name type="ordered locus">Fnod_0605</name>
</gene>
<comment type="function">
    <text evidence="1">Catalyzes the last two sequential reactions in the de novo biosynthetic pathway for UDP-N-acetylglucosamine (UDP-GlcNAc). The C-terminal domain catalyzes the transfer of acetyl group from acetyl coenzyme A to glucosamine-1-phosphate (GlcN-1-P) to produce N-acetylglucosamine-1-phosphate (GlcNAc-1-P), which is converted into UDP-GlcNAc by the transfer of uridine 5-monophosphate (from uridine 5-triphosphate), a reaction catalyzed by the N-terminal domain.</text>
</comment>
<comment type="catalytic activity">
    <reaction evidence="1">
        <text>alpha-D-glucosamine 1-phosphate + acetyl-CoA = N-acetyl-alpha-D-glucosamine 1-phosphate + CoA + H(+)</text>
        <dbReference type="Rhea" id="RHEA:13725"/>
        <dbReference type="ChEBI" id="CHEBI:15378"/>
        <dbReference type="ChEBI" id="CHEBI:57287"/>
        <dbReference type="ChEBI" id="CHEBI:57288"/>
        <dbReference type="ChEBI" id="CHEBI:57776"/>
        <dbReference type="ChEBI" id="CHEBI:58516"/>
        <dbReference type="EC" id="2.3.1.157"/>
    </reaction>
</comment>
<comment type="catalytic activity">
    <reaction evidence="1">
        <text>N-acetyl-alpha-D-glucosamine 1-phosphate + UTP + H(+) = UDP-N-acetyl-alpha-D-glucosamine + diphosphate</text>
        <dbReference type="Rhea" id="RHEA:13509"/>
        <dbReference type="ChEBI" id="CHEBI:15378"/>
        <dbReference type="ChEBI" id="CHEBI:33019"/>
        <dbReference type="ChEBI" id="CHEBI:46398"/>
        <dbReference type="ChEBI" id="CHEBI:57705"/>
        <dbReference type="ChEBI" id="CHEBI:57776"/>
        <dbReference type="EC" id="2.7.7.23"/>
    </reaction>
</comment>
<comment type="cofactor">
    <cofactor evidence="1">
        <name>Mg(2+)</name>
        <dbReference type="ChEBI" id="CHEBI:18420"/>
    </cofactor>
    <text evidence="1">Binds 1 Mg(2+) ion per subunit.</text>
</comment>
<comment type="pathway">
    <text evidence="1">Nucleotide-sugar biosynthesis; UDP-N-acetyl-alpha-D-glucosamine biosynthesis; N-acetyl-alpha-D-glucosamine 1-phosphate from alpha-D-glucosamine 6-phosphate (route II): step 2/2.</text>
</comment>
<comment type="pathway">
    <text evidence="1">Nucleotide-sugar biosynthesis; UDP-N-acetyl-alpha-D-glucosamine biosynthesis; UDP-N-acetyl-alpha-D-glucosamine from N-acetyl-alpha-D-glucosamine 1-phosphate: step 1/1.</text>
</comment>
<comment type="pathway">
    <text evidence="1">Bacterial outer membrane biogenesis; LPS lipid A biosynthesis.</text>
</comment>
<comment type="subunit">
    <text evidence="1">Homotrimer.</text>
</comment>
<comment type="subcellular location">
    <subcellularLocation>
        <location evidence="1">Cytoplasm</location>
    </subcellularLocation>
</comment>
<comment type="similarity">
    <text evidence="1">In the N-terminal section; belongs to the N-acetylglucosamine-1-phosphate uridyltransferase family.</text>
</comment>
<comment type="similarity">
    <text evidence="1">In the C-terminal section; belongs to the transferase hexapeptide repeat family.</text>
</comment>
<evidence type="ECO:0000255" key="1">
    <source>
        <dbReference type="HAMAP-Rule" id="MF_01631"/>
    </source>
</evidence>
<organism>
    <name type="scientific">Fervidobacterium nodosum (strain ATCC 35602 / DSM 5306 / Rt17-B1)</name>
    <dbReference type="NCBI Taxonomy" id="381764"/>
    <lineage>
        <taxon>Bacteria</taxon>
        <taxon>Thermotogati</taxon>
        <taxon>Thermotogota</taxon>
        <taxon>Thermotogae</taxon>
        <taxon>Thermotogales</taxon>
        <taxon>Fervidobacteriaceae</taxon>
        <taxon>Fervidobacterium</taxon>
    </lineage>
</organism>
<sequence length="452" mass="49618">MKVLILAAGLGKRMKSKYPKVVHKILGKPMINWVVDLGKAFGEVGVVVGHKADIVKSYLPEDVKTYLQEPQLGTGHAVMCARDFISENEDLLVLYGDVPLLSKETINKLKKEHEEQKNQVTVLTFVTDNPAGYGRIIRENGKVRIVEDKDATEEEKKIKEVNSGIYIFSGKFVLENLDKLSNNNAQGEYYLTDLVGMAERSSTVILEDIVEVSGVNDRIQLAQLETIAKQRILEKLMLSGVTIVDPNSTFIGPDVEIGMDTIIYPFTIIEGYTKIGEDCEVGPYSHIVDSNIGNEVKVIRSEVEKSVIENKVSVGPFSRLREGTVLKEKVKIGNFVETKKTTVGKNSKAQHLTYLGDATIGEDVNVGAGTITCNYDGYKKYPTYIGDGAFIGSNSSLVAPVNIGKGAITGAGSVITEDVPNDALALGRARQIIKEGWAKKKREELKNADHKE</sequence>
<dbReference type="EC" id="2.7.7.23" evidence="1"/>
<dbReference type="EC" id="2.3.1.157" evidence="1"/>
<dbReference type="EMBL" id="CP000771">
    <property type="protein sequence ID" value="ABS60460.1"/>
    <property type="molecule type" value="Genomic_DNA"/>
</dbReference>
<dbReference type="RefSeq" id="WP_011993779.1">
    <property type="nucleotide sequence ID" value="NC_009718.1"/>
</dbReference>
<dbReference type="SMR" id="A7HKM7"/>
<dbReference type="STRING" id="381764.Fnod_0605"/>
<dbReference type="KEGG" id="fno:Fnod_0605"/>
<dbReference type="eggNOG" id="COG1207">
    <property type="taxonomic scope" value="Bacteria"/>
</dbReference>
<dbReference type="HOGENOM" id="CLU_029499_15_2_0"/>
<dbReference type="OrthoDB" id="9775031at2"/>
<dbReference type="UniPathway" id="UPA00113">
    <property type="reaction ID" value="UER00532"/>
</dbReference>
<dbReference type="UniPathway" id="UPA00113">
    <property type="reaction ID" value="UER00533"/>
</dbReference>
<dbReference type="UniPathway" id="UPA00973"/>
<dbReference type="Proteomes" id="UP000002415">
    <property type="component" value="Chromosome"/>
</dbReference>
<dbReference type="GO" id="GO:0005737">
    <property type="term" value="C:cytoplasm"/>
    <property type="evidence" value="ECO:0007669"/>
    <property type="project" value="UniProtKB-SubCell"/>
</dbReference>
<dbReference type="GO" id="GO:0016020">
    <property type="term" value="C:membrane"/>
    <property type="evidence" value="ECO:0007669"/>
    <property type="project" value="GOC"/>
</dbReference>
<dbReference type="GO" id="GO:0019134">
    <property type="term" value="F:glucosamine-1-phosphate N-acetyltransferase activity"/>
    <property type="evidence" value="ECO:0007669"/>
    <property type="project" value="UniProtKB-UniRule"/>
</dbReference>
<dbReference type="GO" id="GO:0000287">
    <property type="term" value="F:magnesium ion binding"/>
    <property type="evidence" value="ECO:0007669"/>
    <property type="project" value="UniProtKB-UniRule"/>
</dbReference>
<dbReference type="GO" id="GO:0003977">
    <property type="term" value="F:UDP-N-acetylglucosamine diphosphorylase activity"/>
    <property type="evidence" value="ECO:0007669"/>
    <property type="project" value="UniProtKB-UniRule"/>
</dbReference>
<dbReference type="GO" id="GO:0000902">
    <property type="term" value="P:cell morphogenesis"/>
    <property type="evidence" value="ECO:0007669"/>
    <property type="project" value="UniProtKB-UniRule"/>
</dbReference>
<dbReference type="GO" id="GO:0071555">
    <property type="term" value="P:cell wall organization"/>
    <property type="evidence" value="ECO:0007669"/>
    <property type="project" value="UniProtKB-KW"/>
</dbReference>
<dbReference type="GO" id="GO:0009245">
    <property type="term" value="P:lipid A biosynthetic process"/>
    <property type="evidence" value="ECO:0007669"/>
    <property type="project" value="UniProtKB-UniRule"/>
</dbReference>
<dbReference type="GO" id="GO:0009252">
    <property type="term" value="P:peptidoglycan biosynthetic process"/>
    <property type="evidence" value="ECO:0007669"/>
    <property type="project" value="UniProtKB-UniRule"/>
</dbReference>
<dbReference type="GO" id="GO:0008360">
    <property type="term" value="P:regulation of cell shape"/>
    <property type="evidence" value="ECO:0007669"/>
    <property type="project" value="UniProtKB-KW"/>
</dbReference>
<dbReference type="GO" id="GO:0006048">
    <property type="term" value="P:UDP-N-acetylglucosamine biosynthetic process"/>
    <property type="evidence" value="ECO:0007669"/>
    <property type="project" value="UniProtKB-UniPathway"/>
</dbReference>
<dbReference type="CDD" id="cd02540">
    <property type="entry name" value="GT2_GlmU_N_bac"/>
    <property type="match status" value="1"/>
</dbReference>
<dbReference type="CDD" id="cd03353">
    <property type="entry name" value="LbH_GlmU_C"/>
    <property type="match status" value="1"/>
</dbReference>
<dbReference type="Gene3D" id="2.160.10.10">
    <property type="entry name" value="Hexapeptide repeat proteins"/>
    <property type="match status" value="1"/>
</dbReference>
<dbReference type="Gene3D" id="3.90.550.10">
    <property type="entry name" value="Spore Coat Polysaccharide Biosynthesis Protein SpsA, Chain A"/>
    <property type="match status" value="1"/>
</dbReference>
<dbReference type="HAMAP" id="MF_01631">
    <property type="entry name" value="GlmU"/>
    <property type="match status" value="1"/>
</dbReference>
<dbReference type="InterPro" id="IPR005882">
    <property type="entry name" value="Bifunctional_GlmU"/>
</dbReference>
<dbReference type="InterPro" id="IPR050065">
    <property type="entry name" value="GlmU-like"/>
</dbReference>
<dbReference type="InterPro" id="IPR056818">
    <property type="entry name" value="GlmU/GlgC-like_hexapep"/>
</dbReference>
<dbReference type="InterPro" id="IPR038009">
    <property type="entry name" value="GlmU_C_LbH"/>
</dbReference>
<dbReference type="InterPro" id="IPR001451">
    <property type="entry name" value="Hexapep"/>
</dbReference>
<dbReference type="InterPro" id="IPR025877">
    <property type="entry name" value="MobA-like_NTP_Trfase"/>
</dbReference>
<dbReference type="InterPro" id="IPR029044">
    <property type="entry name" value="Nucleotide-diphossugar_trans"/>
</dbReference>
<dbReference type="InterPro" id="IPR011004">
    <property type="entry name" value="Trimer_LpxA-like_sf"/>
</dbReference>
<dbReference type="NCBIfam" id="TIGR01173">
    <property type="entry name" value="glmU"/>
    <property type="match status" value="1"/>
</dbReference>
<dbReference type="NCBIfam" id="NF010934">
    <property type="entry name" value="PRK14354.1"/>
    <property type="match status" value="1"/>
</dbReference>
<dbReference type="NCBIfam" id="NF010937">
    <property type="entry name" value="PRK14357.1"/>
    <property type="match status" value="1"/>
</dbReference>
<dbReference type="PANTHER" id="PTHR43584:SF3">
    <property type="entry name" value="BIFUNCTIONAL PROTEIN GLMU"/>
    <property type="match status" value="1"/>
</dbReference>
<dbReference type="PANTHER" id="PTHR43584">
    <property type="entry name" value="NUCLEOTIDYL TRANSFERASE"/>
    <property type="match status" value="1"/>
</dbReference>
<dbReference type="Pfam" id="PF00132">
    <property type="entry name" value="Hexapep"/>
    <property type="match status" value="1"/>
</dbReference>
<dbReference type="Pfam" id="PF24894">
    <property type="entry name" value="Hexapep_GlmU"/>
    <property type="match status" value="1"/>
</dbReference>
<dbReference type="Pfam" id="PF12804">
    <property type="entry name" value="NTP_transf_3"/>
    <property type="match status" value="1"/>
</dbReference>
<dbReference type="SUPFAM" id="SSF53448">
    <property type="entry name" value="Nucleotide-diphospho-sugar transferases"/>
    <property type="match status" value="1"/>
</dbReference>
<dbReference type="SUPFAM" id="SSF51161">
    <property type="entry name" value="Trimeric LpxA-like enzymes"/>
    <property type="match status" value="1"/>
</dbReference>
<name>GLMU_FERNB</name>
<accession>A7HKM7</accession>
<reference key="1">
    <citation type="submission" date="2007-07" db="EMBL/GenBank/DDBJ databases">
        <title>Complete sequence of Fervidobacterium nodosum Rt17-B1.</title>
        <authorList>
            <consortium name="US DOE Joint Genome Institute"/>
            <person name="Copeland A."/>
            <person name="Lucas S."/>
            <person name="Lapidus A."/>
            <person name="Barry K."/>
            <person name="Glavina del Rio T."/>
            <person name="Dalin E."/>
            <person name="Tice H."/>
            <person name="Pitluck S."/>
            <person name="Saunders E."/>
            <person name="Brettin T."/>
            <person name="Bruce D."/>
            <person name="Detter J.C."/>
            <person name="Han C."/>
            <person name="Schmutz J."/>
            <person name="Larimer F."/>
            <person name="Land M."/>
            <person name="Hauser L."/>
            <person name="Kyrpides N."/>
            <person name="Mikhailova N."/>
            <person name="Nelson K."/>
            <person name="Gogarten J.P."/>
            <person name="Noll K."/>
            <person name="Richardson P."/>
        </authorList>
    </citation>
    <scope>NUCLEOTIDE SEQUENCE [LARGE SCALE GENOMIC DNA]</scope>
    <source>
        <strain>ATCC 35602 / DSM 5306 / Rt17-B1</strain>
    </source>
</reference>
<protein>
    <recommendedName>
        <fullName evidence="1">Bifunctional protein GlmU</fullName>
    </recommendedName>
    <domain>
        <recommendedName>
            <fullName evidence="1">UDP-N-acetylglucosamine pyrophosphorylase</fullName>
            <ecNumber evidence="1">2.7.7.23</ecNumber>
        </recommendedName>
        <alternativeName>
            <fullName evidence="1">N-acetylglucosamine-1-phosphate uridyltransferase</fullName>
        </alternativeName>
    </domain>
    <domain>
        <recommendedName>
            <fullName evidence="1">Glucosamine-1-phosphate N-acetyltransferase</fullName>
            <ecNumber evidence="1">2.3.1.157</ecNumber>
        </recommendedName>
    </domain>
</protein>
<proteinExistence type="inferred from homology"/>
<keyword id="KW-0012">Acyltransferase</keyword>
<keyword id="KW-0133">Cell shape</keyword>
<keyword id="KW-0961">Cell wall biogenesis/degradation</keyword>
<keyword id="KW-0963">Cytoplasm</keyword>
<keyword id="KW-0460">Magnesium</keyword>
<keyword id="KW-0479">Metal-binding</keyword>
<keyword id="KW-0511">Multifunctional enzyme</keyword>
<keyword id="KW-0548">Nucleotidyltransferase</keyword>
<keyword id="KW-0573">Peptidoglycan synthesis</keyword>
<keyword id="KW-1185">Reference proteome</keyword>
<keyword id="KW-0677">Repeat</keyword>
<keyword id="KW-0808">Transferase</keyword>
<feature type="chain" id="PRO_1000073646" description="Bifunctional protein GlmU">
    <location>
        <begin position="1"/>
        <end position="452"/>
    </location>
</feature>
<feature type="region of interest" description="Pyrophosphorylase" evidence="1">
    <location>
        <begin position="1"/>
        <end position="218"/>
    </location>
</feature>
<feature type="region of interest" description="Linker" evidence="1">
    <location>
        <begin position="219"/>
        <end position="239"/>
    </location>
</feature>
<feature type="region of interest" description="N-acetyltransferase" evidence="1">
    <location>
        <begin position="240"/>
        <end position="452"/>
    </location>
</feature>
<feature type="active site" description="Proton acceptor" evidence="1">
    <location>
        <position position="351"/>
    </location>
</feature>
<feature type="binding site" evidence="1">
    <location>
        <begin position="6"/>
        <end position="9"/>
    </location>
    <ligand>
        <name>UDP-N-acetyl-alpha-D-glucosamine</name>
        <dbReference type="ChEBI" id="CHEBI:57705"/>
    </ligand>
</feature>
<feature type="binding site" evidence="1">
    <location>
        <position position="20"/>
    </location>
    <ligand>
        <name>UDP-N-acetyl-alpha-D-glucosamine</name>
        <dbReference type="ChEBI" id="CHEBI:57705"/>
    </ligand>
</feature>
<feature type="binding site" evidence="1">
    <location>
        <position position="68"/>
    </location>
    <ligand>
        <name>UDP-N-acetyl-alpha-D-glucosamine</name>
        <dbReference type="ChEBI" id="CHEBI:57705"/>
    </ligand>
</feature>
<feature type="binding site" evidence="1">
    <location>
        <begin position="73"/>
        <end position="74"/>
    </location>
    <ligand>
        <name>UDP-N-acetyl-alpha-D-glucosamine</name>
        <dbReference type="ChEBI" id="CHEBI:57705"/>
    </ligand>
</feature>
<feature type="binding site" evidence="1">
    <location>
        <begin position="95"/>
        <end position="97"/>
    </location>
    <ligand>
        <name>UDP-N-acetyl-alpha-D-glucosamine</name>
        <dbReference type="ChEBI" id="CHEBI:57705"/>
    </ligand>
</feature>
<feature type="binding site" evidence="1">
    <location>
        <position position="97"/>
    </location>
    <ligand>
        <name>Mg(2+)</name>
        <dbReference type="ChEBI" id="CHEBI:18420"/>
    </ligand>
</feature>
<feature type="binding site" evidence="1">
    <location>
        <position position="134"/>
    </location>
    <ligand>
        <name>UDP-N-acetyl-alpha-D-glucosamine</name>
        <dbReference type="ChEBI" id="CHEBI:57705"/>
    </ligand>
</feature>
<feature type="binding site" evidence="1">
    <location>
        <position position="147"/>
    </location>
    <ligand>
        <name>UDP-N-acetyl-alpha-D-glucosamine</name>
        <dbReference type="ChEBI" id="CHEBI:57705"/>
    </ligand>
</feature>
<feature type="binding site" evidence="1">
    <location>
        <position position="162"/>
    </location>
    <ligand>
        <name>UDP-N-acetyl-alpha-D-glucosamine</name>
        <dbReference type="ChEBI" id="CHEBI:57705"/>
    </ligand>
</feature>
<feature type="binding site" evidence="1">
    <location>
        <position position="216"/>
    </location>
    <ligand>
        <name>Mg(2+)</name>
        <dbReference type="ChEBI" id="CHEBI:18420"/>
    </ligand>
</feature>
<feature type="binding site" evidence="1">
    <location>
        <position position="216"/>
    </location>
    <ligand>
        <name>UDP-N-acetyl-alpha-D-glucosamine</name>
        <dbReference type="ChEBI" id="CHEBI:57705"/>
    </ligand>
</feature>
<feature type="binding site" evidence="1">
    <location>
        <position position="321"/>
    </location>
    <ligand>
        <name>UDP-N-acetyl-alpha-D-glucosamine</name>
        <dbReference type="ChEBI" id="CHEBI:57705"/>
    </ligand>
</feature>
<feature type="binding site" evidence="1">
    <location>
        <position position="339"/>
    </location>
    <ligand>
        <name>UDP-N-acetyl-alpha-D-glucosamine</name>
        <dbReference type="ChEBI" id="CHEBI:57705"/>
    </ligand>
</feature>
<feature type="binding site" evidence="1">
    <location>
        <position position="354"/>
    </location>
    <ligand>
        <name>UDP-N-acetyl-alpha-D-glucosamine</name>
        <dbReference type="ChEBI" id="CHEBI:57705"/>
    </ligand>
</feature>
<feature type="binding site" evidence="1">
    <location>
        <position position="365"/>
    </location>
    <ligand>
        <name>UDP-N-acetyl-alpha-D-glucosamine</name>
        <dbReference type="ChEBI" id="CHEBI:57705"/>
    </ligand>
</feature>
<feature type="binding site" evidence="1">
    <location>
        <position position="368"/>
    </location>
    <ligand>
        <name>acetyl-CoA</name>
        <dbReference type="ChEBI" id="CHEBI:57288"/>
    </ligand>
</feature>
<feature type="binding site" evidence="1">
    <location>
        <begin position="374"/>
        <end position="375"/>
    </location>
    <ligand>
        <name>acetyl-CoA</name>
        <dbReference type="ChEBI" id="CHEBI:57288"/>
    </ligand>
</feature>
<feature type="binding site" evidence="1">
    <location>
        <position position="393"/>
    </location>
    <ligand>
        <name>acetyl-CoA</name>
        <dbReference type="ChEBI" id="CHEBI:57288"/>
    </ligand>
</feature>
<feature type="binding site" evidence="1">
    <location>
        <position position="411"/>
    </location>
    <ligand>
        <name>acetyl-CoA</name>
        <dbReference type="ChEBI" id="CHEBI:57288"/>
    </ligand>
</feature>
<feature type="binding site" evidence="1">
    <location>
        <position position="428"/>
    </location>
    <ligand>
        <name>acetyl-CoA</name>
        <dbReference type="ChEBI" id="CHEBI:57288"/>
    </ligand>
</feature>